<feature type="chain" id="PRO_0000204921" description="Nucleoporin nsp1">
    <location>
        <begin position="1"/>
        <end position="598"/>
    </location>
</feature>
<feature type="region of interest" description="Disordered" evidence="2">
    <location>
        <begin position="1"/>
        <end position="140"/>
    </location>
</feature>
<feature type="region of interest" description="Disordered" evidence="2">
    <location>
        <begin position="154"/>
        <end position="420"/>
    </location>
</feature>
<feature type="compositionally biased region" description="Polar residues" evidence="2">
    <location>
        <begin position="1"/>
        <end position="13"/>
    </location>
</feature>
<feature type="compositionally biased region" description="Low complexity" evidence="2">
    <location>
        <begin position="24"/>
        <end position="86"/>
    </location>
</feature>
<feature type="compositionally biased region" description="Polar residues" evidence="2">
    <location>
        <begin position="87"/>
        <end position="99"/>
    </location>
</feature>
<feature type="compositionally biased region" description="Low complexity" evidence="2">
    <location>
        <begin position="123"/>
        <end position="140"/>
    </location>
</feature>
<feature type="compositionally biased region" description="Low complexity" evidence="2">
    <location>
        <begin position="154"/>
        <end position="169"/>
    </location>
</feature>
<feature type="compositionally biased region" description="Low complexity" evidence="2">
    <location>
        <begin position="176"/>
        <end position="197"/>
    </location>
</feature>
<feature type="compositionally biased region" description="Low complexity" evidence="2">
    <location>
        <begin position="208"/>
        <end position="229"/>
    </location>
</feature>
<feature type="compositionally biased region" description="Polar residues" evidence="2">
    <location>
        <begin position="232"/>
        <end position="270"/>
    </location>
</feature>
<feature type="compositionally biased region" description="Low complexity" evidence="2">
    <location>
        <begin position="279"/>
        <end position="302"/>
    </location>
</feature>
<feature type="compositionally biased region" description="Polar residues" evidence="2">
    <location>
        <begin position="311"/>
        <end position="336"/>
    </location>
</feature>
<feature type="compositionally biased region" description="Low complexity" evidence="2">
    <location>
        <begin position="337"/>
        <end position="357"/>
    </location>
</feature>
<feature type="compositionally biased region" description="Low complexity" evidence="2">
    <location>
        <begin position="379"/>
        <end position="388"/>
    </location>
</feature>
<feature type="modified residue" description="Phosphoserine" evidence="5">
    <location>
        <position position="489"/>
    </location>
</feature>
<feature type="modified residue" description="Phosphoserine" evidence="5">
    <location>
        <position position="490"/>
    </location>
</feature>
<gene>
    <name type="primary">nsp1</name>
    <name type="ORF">SPAC26A3.15c</name>
</gene>
<accession>Q10168</accession>
<name>NSP1_SCHPO</name>
<proteinExistence type="evidence at protein level"/>
<dbReference type="EMBL" id="CU329670">
    <property type="protein sequence ID" value="CAA93238.1"/>
    <property type="molecule type" value="Genomic_DNA"/>
</dbReference>
<dbReference type="PIR" id="T38403">
    <property type="entry name" value="T38403"/>
</dbReference>
<dbReference type="RefSeq" id="NP_594158.1">
    <property type="nucleotide sequence ID" value="NM_001019582.2"/>
</dbReference>
<dbReference type="SMR" id="Q10168"/>
<dbReference type="BioGRID" id="279121">
    <property type="interactions" value="5"/>
</dbReference>
<dbReference type="FunCoup" id="Q10168">
    <property type="interactions" value="124"/>
</dbReference>
<dbReference type="STRING" id="284812.Q10168"/>
<dbReference type="iPTMnet" id="Q10168"/>
<dbReference type="PaxDb" id="4896-SPAC26A3.15c.1"/>
<dbReference type="EnsemblFungi" id="SPAC26A3.15c.1">
    <property type="protein sequence ID" value="SPAC26A3.15c.1:pep"/>
    <property type="gene ID" value="SPAC26A3.15c"/>
</dbReference>
<dbReference type="GeneID" id="2542668"/>
<dbReference type="KEGG" id="spo:2542668"/>
<dbReference type="PomBase" id="SPAC26A3.15c">
    <property type="gene designation" value="nsp1"/>
</dbReference>
<dbReference type="VEuPathDB" id="FungiDB:SPAC26A3.15c"/>
<dbReference type="eggNOG" id="KOG2196">
    <property type="taxonomic scope" value="Eukaryota"/>
</dbReference>
<dbReference type="HOGENOM" id="CLU_488480_0_0_1"/>
<dbReference type="InParanoid" id="Q10168"/>
<dbReference type="OMA" id="EMMSKQV"/>
<dbReference type="PhylomeDB" id="Q10168"/>
<dbReference type="Reactome" id="R-SPO-159227">
    <property type="pathway name" value="Transport of the SLBP independent Mature mRNA"/>
</dbReference>
<dbReference type="Reactome" id="R-SPO-159231">
    <property type="pathway name" value="Transport of Mature mRNA Derived from an Intronless Transcript"/>
</dbReference>
<dbReference type="Reactome" id="R-SPO-159236">
    <property type="pathway name" value="Transport of Mature mRNA derived from an Intron-Containing Transcript"/>
</dbReference>
<dbReference type="Reactome" id="R-SPO-3371453">
    <property type="pathway name" value="Regulation of HSF1-mediated heat shock response"/>
</dbReference>
<dbReference type="Reactome" id="R-SPO-4085377">
    <property type="pathway name" value="SUMOylation of SUMOylation proteins"/>
</dbReference>
<dbReference type="Reactome" id="R-SPO-4551638">
    <property type="pathway name" value="SUMOylation of chromatin organization proteins"/>
</dbReference>
<dbReference type="Reactome" id="R-SPO-4570464">
    <property type="pathway name" value="SUMOylation of RNA binding proteins"/>
</dbReference>
<dbReference type="Reactome" id="R-SPO-5578749">
    <property type="pathway name" value="Transcriptional regulation by small RNAs"/>
</dbReference>
<dbReference type="PRO" id="PR:Q10168"/>
<dbReference type="Proteomes" id="UP000002485">
    <property type="component" value="Chromosome I"/>
</dbReference>
<dbReference type="GO" id="GO:0005635">
    <property type="term" value="C:nuclear envelope"/>
    <property type="evidence" value="ECO:0007005"/>
    <property type="project" value="PomBase"/>
</dbReference>
<dbReference type="GO" id="GO:0031965">
    <property type="term" value="C:nuclear membrane"/>
    <property type="evidence" value="ECO:0007669"/>
    <property type="project" value="UniProtKB-SubCell"/>
</dbReference>
<dbReference type="GO" id="GO:0034399">
    <property type="term" value="C:nuclear periphery"/>
    <property type="evidence" value="ECO:0000314"/>
    <property type="project" value="PomBase"/>
</dbReference>
<dbReference type="GO" id="GO:0005643">
    <property type="term" value="C:nuclear pore"/>
    <property type="evidence" value="ECO:0000314"/>
    <property type="project" value="PomBase"/>
</dbReference>
<dbReference type="GO" id="GO:0044613">
    <property type="term" value="C:nuclear pore central transport channel"/>
    <property type="evidence" value="ECO:0000318"/>
    <property type="project" value="GO_Central"/>
</dbReference>
<dbReference type="GO" id="GO:0044615">
    <property type="term" value="C:nuclear pore nuclear basket"/>
    <property type="evidence" value="ECO:0000266"/>
    <property type="project" value="PomBase"/>
</dbReference>
<dbReference type="GO" id="GO:0005543">
    <property type="term" value="F:phospholipid binding"/>
    <property type="evidence" value="ECO:0000318"/>
    <property type="project" value="GO_Central"/>
</dbReference>
<dbReference type="GO" id="GO:0017056">
    <property type="term" value="F:structural constituent of nuclear pore"/>
    <property type="evidence" value="ECO:0000318"/>
    <property type="project" value="GO_Central"/>
</dbReference>
<dbReference type="GO" id="GO:0051028">
    <property type="term" value="P:mRNA transport"/>
    <property type="evidence" value="ECO:0007669"/>
    <property type="project" value="UniProtKB-KW"/>
</dbReference>
<dbReference type="GO" id="GO:0006606">
    <property type="term" value="P:protein import into nucleus"/>
    <property type="evidence" value="ECO:0000318"/>
    <property type="project" value="GO_Central"/>
</dbReference>
<dbReference type="GO" id="GO:0000054">
    <property type="term" value="P:ribosomal subunit export from nucleus"/>
    <property type="evidence" value="ECO:0000266"/>
    <property type="project" value="PomBase"/>
</dbReference>
<dbReference type="GO" id="GO:0006405">
    <property type="term" value="P:RNA export from nucleus"/>
    <property type="evidence" value="ECO:0000318"/>
    <property type="project" value="GO_Central"/>
</dbReference>
<dbReference type="FunFam" id="1.20.5.170:FF:000040">
    <property type="entry name" value="Nuclear pore glycoprotein p62"/>
    <property type="match status" value="1"/>
</dbReference>
<dbReference type="Gene3D" id="1.20.5.170">
    <property type="match status" value="1"/>
</dbReference>
<dbReference type="InterPro" id="IPR026010">
    <property type="entry name" value="NSP1/NUP62"/>
</dbReference>
<dbReference type="InterPro" id="IPR007758">
    <property type="entry name" value="Nucleoporin_NSP1_C"/>
</dbReference>
<dbReference type="PANTHER" id="PTHR12084:SF0">
    <property type="entry name" value="NUCLEAR PORE GLYCOPROTEIN P62"/>
    <property type="match status" value="1"/>
</dbReference>
<dbReference type="PANTHER" id="PTHR12084">
    <property type="entry name" value="NUCLEAR PORE GLYCOPROTEIN P62-RELATED"/>
    <property type="match status" value="1"/>
</dbReference>
<dbReference type="Pfam" id="PF05064">
    <property type="entry name" value="Nsp1_C"/>
    <property type="match status" value="1"/>
</dbReference>
<dbReference type="SUPFAM" id="SSF64518">
    <property type="entry name" value="Phase 1 flagellin"/>
    <property type="match status" value="1"/>
</dbReference>
<reference key="1">
    <citation type="journal article" date="2002" name="Nature">
        <title>The genome sequence of Schizosaccharomyces pombe.</title>
        <authorList>
            <person name="Wood V."/>
            <person name="Gwilliam R."/>
            <person name="Rajandream M.A."/>
            <person name="Lyne M.H."/>
            <person name="Lyne R."/>
            <person name="Stewart A."/>
            <person name="Sgouros J.G."/>
            <person name="Peat N."/>
            <person name="Hayles J."/>
            <person name="Baker S.G."/>
            <person name="Basham D."/>
            <person name="Bowman S."/>
            <person name="Brooks K."/>
            <person name="Brown D."/>
            <person name="Brown S."/>
            <person name="Chillingworth T."/>
            <person name="Churcher C.M."/>
            <person name="Collins M."/>
            <person name="Connor R."/>
            <person name="Cronin A."/>
            <person name="Davis P."/>
            <person name="Feltwell T."/>
            <person name="Fraser A."/>
            <person name="Gentles S."/>
            <person name="Goble A."/>
            <person name="Hamlin N."/>
            <person name="Harris D.E."/>
            <person name="Hidalgo J."/>
            <person name="Hodgson G."/>
            <person name="Holroyd S."/>
            <person name="Hornsby T."/>
            <person name="Howarth S."/>
            <person name="Huckle E.J."/>
            <person name="Hunt S."/>
            <person name="Jagels K."/>
            <person name="James K.D."/>
            <person name="Jones L."/>
            <person name="Jones M."/>
            <person name="Leather S."/>
            <person name="McDonald S."/>
            <person name="McLean J."/>
            <person name="Mooney P."/>
            <person name="Moule S."/>
            <person name="Mungall K.L."/>
            <person name="Murphy L.D."/>
            <person name="Niblett D."/>
            <person name="Odell C."/>
            <person name="Oliver K."/>
            <person name="O'Neil S."/>
            <person name="Pearson D."/>
            <person name="Quail M.A."/>
            <person name="Rabbinowitsch E."/>
            <person name="Rutherford K.M."/>
            <person name="Rutter S."/>
            <person name="Saunders D."/>
            <person name="Seeger K."/>
            <person name="Sharp S."/>
            <person name="Skelton J."/>
            <person name="Simmonds M.N."/>
            <person name="Squares R."/>
            <person name="Squares S."/>
            <person name="Stevens K."/>
            <person name="Taylor K."/>
            <person name="Taylor R.G."/>
            <person name="Tivey A."/>
            <person name="Walsh S.V."/>
            <person name="Warren T."/>
            <person name="Whitehead S."/>
            <person name="Woodward J.R."/>
            <person name="Volckaert G."/>
            <person name="Aert R."/>
            <person name="Robben J."/>
            <person name="Grymonprez B."/>
            <person name="Weltjens I."/>
            <person name="Vanstreels E."/>
            <person name="Rieger M."/>
            <person name="Schaefer M."/>
            <person name="Mueller-Auer S."/>
            <person name="Gabel C."/>
            <person name="Fuchs M."/>
            <person name="Duesterhoeft A."/>
            <person name="Fritzc C."/>
            <person name="Holzer E."/>
            <person name="Moestl D."/>
            <person name="Hilbert H."/>
            <person name="Borzym K."/>
            <person name="Langer I."/>
            <person name="Beck A."/>
            <person name="Lehrach H."/>
            <person name="Reinhardt R."/>
            <person name="Pohl T.M."/>
            <person name="Eger P."/>
            <person name="Zimmermann W."/>
            <person name="Wedler H."/>
            <person name="Wambutt R."/>
            <person name="Purnelle B."/>
            <person name="Goffeau A."/>
            <person name="Cadieu E."/>
            <person name="Dreano S."/>
            <person name="Gloux S."/>
            <person name="Lelaure V."/>
            <person name="Mottier S."/>
            <person name="Galibert F."/>
            <person name="Aves S.J."/>
            <person name="Xiang Z."/>
            <person name="Hunt C."/>
            <person name="Moore K."/>
            <person name="Hurst S.M."/>
            <person name="Lucas M."/>
            <person name="Rochet M."/>
            <person name="Gaillardin C."/>
            <person name="Tallada V.A."/>
            <person name="Garzon A."/>
            <person name="Thode G."/>
            <person name="Daga R.R."/>
            <person name="Cruzado L."/>
            <person name="Jimenez J."/>
            <person name="Sanchez M."/>
            <person name="del Rey F."/>
            <person name="Benito J."/>
            <person name="Dominguez A."/>
            <person name="Revuelta J.L."/>
            <person name="Moreno S."/>
            <person name="Armstrong J."/>
            <person name="Forsburg S.L."/>
            <person name="Cerutti L."/>
            <person name="Lowe T."/>
            <person name="McCombie W.R."/>
            <person name="Paulsen I."/>
            <person name="Potashkin J."/>
            <person name="Shpakovski G.V."/>
            <person name="Ussery D."/>
            <person name="Barrell B.G."/>
            <person name="Nurse P."/>
        </authorList>
    </citation>
    <scope>NUCLEOTIDE SEQUENCE [LARGE SCALE GENOMIC DNA]</scope>
    <source>
        <strain>972 / ATCC 24843</strain>
    </source>
</reference>
<reference key="2">
    <citation type="journal article" date="2004" name="Yeast">
        <title>Identification of genes encoding putative nucleoporins and transport factors in the fission yeast Schizosaccharomyces pombe: a deletion analysis.</title>
        <authorList>
            <person name="Chen X.Q."/>
            <person name="Du X."/>
            <person name="Liu J."/>
            <person name="Balasubramanian M.K."/>
            <person name="Balasundaram D."/>
        </authorList>
    </citation>
    <scope>FUNCTION</scope>
    <scope>SUBCELLULAR LOCATION</scope>
    <scope>DISRUPTION PHENOTYPE</scope>
</reference>
<reference key="3">
    <citation type="journal article" date="2006" name="Nat. Biotechnol.">
        <title>ORFeome cloning and global analysis of protein localization in the fission yeast Schizosaccharomyces pombe.</title>
        <authorList>
            <person name="Matsuyama A."/>
            <person name="Arai R."/>
            <person name="Yashiroda Y."/>
            <person name="Shirai A."/>
            <person name="Kamata A."/>
            <person name="Sekido S."/>
            <person name="Kobayashi Y."/>
            <person name="Hashimoto A."/>
            <person name="Hamamoto M."/>
            <person name="Hiraoka Y."/>
            <person name="Horinouchi S."/>
            <person name="Yoshida M."/>
        </authorList>
    </citation>
    <scope>SUBCELLULAR LOCATION [LARGE SCALE ANALYSIS]</scope>
</reference>
<reference key="4">
    <citation type="journal article" date="2008" name="J. Proteome Res.">
        <title>Phosphoproteome analysis of fission yeast.</title>
        <authorList>
            <person name="Wilson-Grady J.T."/>
            <person name="Villen J."/>
            <person name="Gygi S.P."/>
        </authorList>
    </citation>
    <scope>PHOSPHORYLATION [LARGE SCALE ANALYSIS] AT SER-489 AND SER-490</scope>
    <scope>IDENTIFICATION BY MASS SPECTROMETRY</scope>
</reference>
<sequence length="598" mass="60730">MSFNPGNNQNSGFSFGKPAQPNSAAQGAATPAATGLFGNTNNNTSSTAPSGGLFGSNNASNTSAPSTFSFGKAATTGNSTNASTSSPFSFGSTNTNNTAGAKPLFGGLGSTGSANSTGDKSKNTASSATGAATTNPSGSTFNFGSSNNSFNFGKPASTTNTTTPAAASTGSLFGKPAATGTTSNAPPASSTSTTPATGSGGFSFGKPASLGSTNNASTSTTANSGFSFGKPATTSAPGSNTTVTPSSSITGTNDSKPAASNTGSAPTTGFSFGKPAGQAASTATDKGTTTTSSAGTGFSFGKPATTEDTNKPTAPNSAFTKPATSTGDNKPTFSFGNTSKPTENTSTTATSAPPLSNNTKPAEGANQTSSGFSFGKPATDTTTSTSKTGPLFGNKPADPSAKPGATASTTPSEPPPSSIKHKTLQEILNKWSTDLTTQTEVFNKLCDQVSDWDRTLVDNGALISKLYTETVEAEQMSNRIDDGLEYVSSSQQELFKLLDSYETQLETFDGRATSALNVERERAFGVADDILSRLDRLGEDLGTVINQMNDFSKPDDSISEIVKVLNAQLASLGWVENRIFQMEEKLDTIKKKNSDVLF</sequence>
<evidence type="ECO:0000250" key="1">
    <source>
        <dbReference type="UniProtKB" id="P14907"/>
    </source>
</evidence>
<evidence type="ECO:0000256" key="2">
    <source>
        <dbReference type="SAM" id="MobiDB-lite"/>
    </source>
</evidence>
<evidence type="ECO:0000269" key="3">
    <source>
    </source>
</evidence>
<evidence type="ECO:0000269" key="4">
    <source>
    </source>
</evidence>
<evidence type="ECO:0000269" key="5">
    <source>
    </source>
</evidence>
<evidence type="ECO:0000305" key="6"/>
<protein>
    <recommendedName>
        <fullName>Nucleoporin nsp1</fullName>
    </recommendedName>
    <alternativeName>
        <fullName>Nuclear pore protein nsp1</fullName>
    </alternativeName>
    <alternativeName>
        <fullName>Nucleoskeletal-like protein</fullName>
    </alternativeName>
</protein>
<organism>
    <name type="scientific">Schizosaccharomyces pombe (strain 972 / ATCC 24843)</name>
    <name type="common">Fission yeast</name>
    <dbReference type="NCBI Taxonomy" id="284812"/>
    <lineage>
        <taxon>Eukaryota</taxon>
        <taxon>Fungi</taxon>
        <taxon>Dikarya</taxon>
        <taxon>Ascomycota</taxon>
        <taxon>Taphrinomycotina</taxon>
        <taxon>Schizosaccharomycetes</taxon>
        <taxon>Schizosaccharomycetales</taxon>
        <taxon>Schizosaccharomycetaceae</taxon>
        <taxon>Schizosaccharomyces</taxon>
    </lineage>
</organism>
<keyword id="KW-0472">Membrane</keyword>
<keyword id="KW-0509">mRNA transport</keyword>
<keyword id="KW-0906">Nuclear pore complex</keyword>
<keyword id="KW-0539">Nucleus</keyword>
<keyword id="KW-0597">Phosphoprotein</keyword>
<keyword id="KW-0653">Protein transport</keyword>
<keyword id="KW-1185">Reference proteome</keyword>
<keyword id="KW-0811">Translocation</keyword>
<keyword id="KW-0813">Transport</keyword>
<comment type="function">
    <text evidence="3">Functions as a component of the nuclear pore complex (NPC). NPC components, collectively referred to as nucleoporins (NUPs), can play the role of both NPC structural components and of docking or interaction partners for transiently associated nuclear transport factors. Active directional transport is assured by both, a Phe-Gly (FG) repeat affinity gradient for these transport factors across the NPC and a transport cofactor concentration gradient across the nuclear envelope.</text>
</comment>
<comment type="subunit">
    <text evidence="1">Component of the nuclear pore complex (NPC). NPC constitutes the exclusive means of nucleocytoplasmic transport. NPCs allow the passive diffusion of ions and small molecules and the active, nuclear transport receptor-mediated bidirectional transport of macromolecules such as proteins, RNAs, ribonucleoparticles (RNPs), and ribosomal subunits across the nuclear envelope. Due to its 8-fold rotational symmetry, all subunits are present with 8 copies or multiples thereof.</text>
</comment>
<comment type="subcellular location">
    <subcellularLocation>
        <location evidence="3">Nucleus</location>
        <location evidence="3">Nuclear pore complex</location>
    </subcellularLocation>
    <subcellularLocation>
        <location evidence="4">Nucleus membrane</location>
        <topology evidence="4">Peripheral membrane protein</topology>
        <orientation evidence="1">Cytoplasmic side</orientation>
    </subcellularLocation>
    <subcellularLocation>
        <location evidence="4">Nucleus membrane</location>
        <topology evidence="4">Peripheral membrane protein</topology>
        <orientation evidence="1">Nucleoplasmic side</orientation>
    </subcellularLocation>
</comment>
<comment type="domain">
    <text>Contains X-F-X-F-G repeats.</text>
</comment>
<comment type="disruption phenotype">
    <text evidence="3">Abnormal spore germination; spores fail to divide with defective septum.</text>
</comment>
<comment type="similarity">
    <text evidence="6">Belongs to the nucleoporin NSP1/NUP62 family.</text>
</comment>